<evidence type="ECO:0000250" key="1"/>
<evidence type="ECO:0000255" key="2"/>
<evidence type="ECO:0000305" key="3"/>
<dbReference type="EC" id="2.4.99.12"/>
<dbReference type="EMBL" id="AE006914">
    <property type="protein sequence ID" value="AAL02656.1"/>
    <property type="molecule type" value="Genomic_DNA"/>
</dbReference>
<dbReference type="PIR" id="F97714">
    <property type="entry name" value="F97714"/>
</dbReference>
<dbReference type="RefSeq" id="WP_010976798.1">
    <property type="nucleotide sequence ID" value="NC_003103.1"/>
</dbReference>
<dbReference type="SMR" id="Q92JE9"/>
<dbReference type="CAZy" id="GT30">
    <property type="family name" value="Glycosyltransferase Family 30"/>
</dbReference>
<dbReference type="GeneID" id="928074"/>
<dbReference type="KEGG" id="rco:RC0118"/>
<dbReference type="PATRIC" id="fig|272944.4.peg.140"/>
<dbReference type="HOGENOM" id="CLU_036146_2_0_5"/>
<dbReference type="UniPathway" id="UPA00958"/>
<dbReference type="Proteomes" id="UP000000816">
    <property type="component" value="Chromosome"/>
</dbReference>
<dbReference type="GO" id="GO:0005886">
    <property type="term" value="C:plasma membrane"/>
    <property type="evidence" value="ECO:0007669"/>
    <property type="project" value="UniProtKB-SubCell"/>
</dbReference>
<dbReference type="GO" id="GO:0043842">
    <property type="term" value="F:Kdo transferase activity"/>
    <property type="evidence" value="ECO:0007669"/>
    <property type="project" value="UniProtKB-EC"/>
</dbReference>
<dbReference type="GO" id="GO:0009245">
    <property type="term" value="P:lipid A biosynthetic process"/>
    <property type="evidence" value="ECO:0007669"/>
    <property type="project" value="TreeGrafter"/>
</dbReference>
<dbReference type="GO" id="GO:0009244">
    <property type="term" value="P:lipopolysaccharide core region biosynthetic process"/>
    <property type="evidence" value="ECO:0007669"/>
    <property type="project" value="UniProtKB-UniPathway"/>
</dbReference>
<dbReference type="Gene3D" id="3.40.50.11720">
    <property type="entry name" value="3-Deoxy-D-manno-octulosonic-acid transferase, N-terminal domain"/>
    <property type="match status" value="1"/>
</dbReference>
<dbReference type="Gene3D" id="3.40.50.2000">
    <property type="entry name" value="Glycogen Phosphorylase B"/>
    <property type="match status" value="1"/>
</dbReference>
<dbReference type="InterPro" id="IPR007507">
    <property type="entry name" value="Glycos_transf_N"/>
</dbReference>
<dbReference type="InterPro" id="IPR038107">
    <property type="entry name" value="Glycos_transf_N_sf"/>
</dbReference>
<dbReference type="InterPro" id="IPR039901">
    <property type="entry name" value="Kdotransferase"/>
</dbReference>
<dbReference type="InterPro" id="IPR005728">
    <property type="entry name" value="RPE1"/>
</dbReference>
<dbReference type="NCBIfam" id="NF004389">
    <property type="entry name" value="PRK05749.1-5"/>
    <property type="match status" value="1"/>
</dbReference>
<dbReference type="NCBIfam" id="TIGR01045">
    <property type="entry name" value="RPE1"/>
    <property type="match status" value="1"/>
</dbReference>
<dbReference type="PANTHER" id="PTHR42755:SF1">
    <property type="entry name" value="3-DEOXY-D-MANNO-OCTULOSONIC ACID TRANSFERASE, MITOCHONDRIAL-RELATED"/>
    <property type="match status" value="1"/>
</dbReference>
<dbReference type="PANTHER" id="PTHR42755">
    <property type="entry name" value="3-DEOXY-MANNO-OCTULOSONATE CYTIDYLYLTRANSFERASE"/>
    <property type="match status" value="1"/>
</dbReference>
<dbReference type="Pfam" id="PF04413">
    <property type="entry name" value="Glycos_transf_N"/>
    <property type="match status" value="1"/>
</dbReference>
<dbReference type="SUPFAM" id="SSF53756">
    <property type="entry name" value="UDP-Glycosyltransferase/glycogen phosphorylase"/>
    <property type="match status" value="1"/>
</dbReference>
<organism>
    <name type="scientific">Rickettsia conorii (strain ATCC VR-613 / Malish 7)</name>
    <dbReference type="NCBI Taxonomy" id="272944"/>
    <lineage>
        <taxon>Bacteria</taxon>
        <taxon>Pseudomonadati</taxon>
        <taxon>Pseudomonadota</taxon>
        <taxon>Alphaproteobacteria</taxon>
        <taxon>Rickettsiales</taxon>
        <taxon>Rickettsiaceae</taxon>
        <taxon>Rickettsieae</taxon>
        <taxon>Rickettsia</taxon>
        <taxon>spotted fever group</taxon>
    </lineage>
</organism>
<keyword id="KW-0997">Cell inner membrane</keyword>
<keyword id="KW-1003">Cell membrane</keyword>
<keyword id="KW-0448">Lipopolysaccharide biosynthesis</keyword>
<keyword id="KW-0472">Membrane</keyword>
<keyword id="KW-0735">Signal-anchor</keyword>
<keyword id="KW-0808">Transferase</keyword>
<keyword id="KW-0812">Transmembrane</keyword>
<keyword id="KW-1133">Transmembrane helix</keyword>
<sequence length="464" mass="53047">MMLLYYALSFILLPVYFIIILIRLLIGKEDIRRIQERFAIGKHRQDDSLDFMQTSANKEEFKGDTSLRTTTYTLIREDEGLGSTYKLPLEASDARRLIWINAASIGESMVALTLIHNISKRYPDVRFLVTSWTNSSAKILTAKLPKIAVHQFLPIDNIIFTRKFLRNWQPDLGIFIESELWPCTINEGAKQCKLLLVNARISDKSFKAWLQRKSFFQLILKNCSKIIVQSERDLQKFNELGVSDAVNLGNIKFANEKLPVNQEELSKLSLHLDNKRVVLFASTHPEDEEVILPIIKNLKEQFLDCYIILIPRHPERVKSIIDNCKSHNLSATAKSQNDLPVLSDDLYIVDRFGEMGLFFSVATISFIGGSFKQGGHNILEAAYFSNCIIFGPDMSKNTDIAKGVLQNEAAIQIKNGEDLLTKLTYLLRSNNALELTTYRENALKFIKDNQKVLDEYLNVITKFL</sequence>
<accession>Q92JE9</accession>
<feature type="chain" id="PRO_0000286455" description="3-deoxy-D-manno-octulosonic acid transferase">
    <location>
        <begin position="1"/>
        <end position="464"/>
    </location>
</feature>
<feature type="transmembrane region" description="Helical; Signal-anchor" evidence="2">
    <location>
        <begin position="2"/>
        <end position="22"/>
    </location>
</feature>
<feature type="domain" description="RPE1 insert">
    <location>
        <begin position="47"/>
        <end position="93"/>
    </location>
</feature>
<feature type="active site" description="Proton acceptor" evidence="1">
    <location>
        <position position="107"/>
    </location>
</feature>
<feature type="binding site" evidence="1">
    <location>
        <begin position="311"/>
        <end position="312"/>
    </location>
    <ligand>
        <name>CMP</name>
        <dbReference type="ChEBI" id="CHEBI:60377"/>
    </ligand>
</feature>
<feature type="binding site" evidence="1">
    <location>
        <begin position="352"/>
        <end position="354"/>
    </location>
    <ligand>
        <name>CMP</name>
        <dbReference type="ChEBI" id="CHEBI:60377"/>
    </ligand>
</feature>
<feature type="binding site" evidence="1">
    <location>
        <begin position="377"/>
        <end position="380"/>
    </location>
    <ligand>
        <name>CMP</name>
        <dbReference type="ChEBI" id="CHEBI:60377"/>
    </ligand>
</feature>
<feature type="site" description="Transition state stabilizer" evidence="1">
    <location>
        <position position="177"/>
    </location>
</feature>
<feature type="site" description="Transition state stabilizer" evidence="1">
    <location>
        <position position="252"/>
    </location>
</feature>
<proteinExistence type="inferred from homology"/>
<name>KDTA_RICCN</name>
<gene>
    <name type="primary">waaA</name>
    <name type="synonym">kdtA</name>
    <name type="ordered locus">RC0118</name>
</gene>
<comment type="function">
    <text evidence="1">Involved in lipopolysaccharide (LPS) biosynthesis. Catalyzes the transfer of 3-deoxy-D-manno-octulosonate (Kdo) residue(s) from CMP-Kdo to lipid IV(A), the tetraacyldisaccharide-1,4'-bisphosphate precursor of lipid A.</text>
</comment>
<comment type="catalytic activity">
    <reaction>
        <text>lipid IVA (E. coli) + CMP-3-deoxy-beta-D-manno-octulosonate = alpha-Kdo-(2-&gt;6)-lipid IVA (E. coli) + CMP + H(+)</text>
        <dbReference type="Rhea" id="RHEA:28066"/>
        <dbReference type="ChEBI" id="CHEBI:15378"/>
        <dbReference type="ChEBI" id="CHEBI:58603"/>
        <dbReference type="ChEBI" id="CHEBI:60364"/>
        <dbReference type="ChEBI" id="CHEBI:60377"/>
        <dbReference type="ChEBI" id="CHEBI:85987"/>
        <dbReference type="EC" id="2.4.99.12"/>
    </reaction>
</comment>
<comment type="pathway">
    <text>Bacterial outer membrane biogenesis; LPS core biosynthesis.</text>
</comment>
<comment type="subcellular location">
    <subcellularLocation>
        <location evidence="1">Cell inner membrane</location>
        <topology evidence="1">Single-pass membrane protein</topology>
        <orientation evidence="1">Cytoplasmic side</orientation>
    </subcellularLocation>
</comment>
<comment type="similarity">
    <text evidence="3">Belongs to the glycosyltransferase group 1 family. Glycosyltransferase 30 subfamily.</text>
</comment>
<reference key="1">
    <citation type="journal article" date="2001" name="Science">
        <title>Mechanisms of evolution in Rickettsia conorii and R. prowazekii.</title>
        <authorList>
            <person name="Ogata H."/>
            <person name="Audic S."/>
            <person name="Renesto-Audiffren P."/>
            <person name="Fournier P.-E."/>
            <person name="Barbe V."/>
            <person name="Samson D."/>
            <person name="Roux V."/>
            <person name="Cossart P."/>
            <person name="Weissenbach J."/>
            <person name="Claverie J.-M."/>
            <person name="Raoult D."/>
        </authorList>
    </citation>
    <scope>NUCLEOTIDE SEQUENCE [LARGE SCALE GENOMIC DNA]</scope>
    <source>
        <strain>ATCC VR-613 / Malish 7</strain>
    </source>
</reference>
<protein>
    <recommendedName>
        <fullName>3-deoxy-D-manno-octulosonic acid transferase</fullName>
        <shortName>Kdo transferase</shortName>
        <ecNumber>2.4.99.12</ecNumber>
    </recommendedName>
    <alternativeName>
        <fullName>Lipid IV(A) 3-deoxy-D-manno-octulosonic acid transferase</fullName>
    </alternativeName>
</protein>